<reference key="1">
    <citation type="submission" date="2006-12" db="EMBL/GenBank/DDBJ databases">
        <title>Complete sequence of chromosome 1 of Nocardioides sp. JS614.</title>
        <authorList>
            <person name="Copeland A."/>
            <person name="Lucas S."/>
            <person name="Lapidus A."/>
            <person name="Barry K."/>
            <person name="Detter J.C."/>
            <person name="Glavina del Rio T."/>
            <person name="Hammon N."/>
            <person name="Israni S."/>
            <person name="Dalin E."/>
            <person name="Tice H."/>
            <person name="Pitluck S."/>
            <person name="Thompson L.S."/>
            <person name="Brettin T."/>
            <person name="Bruce D."/>
            <person name="Han C."/>
            <person name="Tapia R."/>
            <person name="Schmutz J."/>
            <person name="Larimer F."/>
            <person name="Land M."/>
            <person name="Hauser L."/>
            <person name="Kyrpides N."/>
            <person name="Kim E."/>
            <person name="Mattes T."/>
            <person name="Gossett J."/>
            <person name="Richardson P."/>
        </authorList>
    </citation>
    <scope>NUCLEOTIDE SEQUENCE [LARGE SCALE GENOMIC DNA]</scope>
    <source>
        <strain>ATCC BAA-499 / JS614</strain>
    </source>
</reference>
<keyword id="KW-0030">Aminoacyl-tRNA synthetase</keyword>
<keyword id="KW-0067">ATP-binding</keyword>
<keyword id="KW-0963">Cytoplasm</keyword>
<keyword id="KW-0436">Ligase</keyword>
<keyword id="KW-0479">Metal-binding</keyword>
<keyword id="KW-0547">Nucleotide-binding</keyword>
<keyword id="KW-0648">Protein biosynthesis</keyword>
<keyword id="KW-1185">Reference proteome</keyword>
<keyword id="KW-0694">RNA-binding</keyword>
<keyword id="KW-0820">tRNA-binding</keyword>
<keyword id="KW-0862">Zinc</keyword>
<evidence type="ECO:0000255" key="1">
    <source>
        <dbReference type="HAMAP-Rule" id="MF_00184"/>
    </source>
</evidence>
<evidence type="ECO:0000255" key="2">
    <source>
        <dbReference type="PROSITE-ProRule" id="PRU01228"/>
    </source>
</evidence>
<comment type="function">
    <text evidence="1">Catalyzes the attachment of threonine to tRNA(Thr) in a two-step reaction: L-threonine is first activated by ATP to form Thr-AMP and then transferred to the acceptor end of tRNA(Thr). Also edits incorrectly charged L-seryl-tRNA(Thr).</text>
</comment>
<comment type="catalytic activity">
    <reaction evidence="1">
        <text>tRNA(Thr) + L-threonine + ATP = L-threonyl-tRNA(Thr) + AMP + diphosphate + H(+)</text>
        <dbReference type="Rhea" id="RHEA:24624"/>
        <dbReference type="Rhea" id="RHEA-COMP:9670"/>
        <dbReference type="Rhea" id="RHEA-COMP:9704"/>
        <dbReference type="ChEBI" id="CHEBI:15378"/>
        <dbReference type="ChEBI" id="CHEBI:30616"/>
        <dbReference type="ChEBI" id="CHEBI:33019"/>
        <dbReference type="ChEBI" id="CHEBI:57926"/>
        <dbReference type="ChEBI" id="CHEBI:78442"/>
        <dbReference type="ChEBI" id="CHEBI:78534"/>
        <dbReference type="ChEBI" id="CHEBI:456215"/>
        <dbReference type="EC" id="6.1.1.3"/>
    </reaction>
</comment>
<comment type="cofactor">
    <cofactor evidence="1">
        <name>Zn(2+)</name>
        <dbReference type="ChEBI" id="CHEBI:29105"/>
    </cofactor>
    <text evidence="1">Binds 1 zinc ion per subunit.</text>
</comment>
<comment type="subunit">
    <text evidence="1">Homodimer.</text>
</comment>
<comment type="subcellular location">
    <subcellularLocation>
        <location evidence="1">Cytoplasm</location>
    </subcellularLocation>
</comment>
<comment type="similarity">
    <text evidence="1">Belongs to the class-II aminoacyl-tRNA synthetase family.</text>
</comment>
<accession>A1SJ90</accession>
<organism>
    <name type="scientific">Nocardioides sp. (strain ATCC BAA-499 / JS614)</name>
    <dbReference type="NCBI Taxonomy" id="196162"/>
    <lineage>
        <taxon>Bacteria</taxon>
        <taxon>Bacillati</taxon>
        <taxon>Actinomycetota</taxon>
        <taxon>Actinomycetes</taxon>
        <taxon>Propionibacteriales</taxon>
        <taxon>Nocardioidaceae</taxon>
        <taxon>Nocardioides</taxon>
    </lineage>
</organism>
<feature type="chain" id="PRO_1000020452" description="Threonine--tRNA ligase">
    <location>
        <begin position="1"/>
        <end position="668"/>
    </location>
</feature>
<feature type="domain" description="TGS" evidence="2">
    <location>
        <begin position="1"/>
        <end position="61"/>
    </location>
</feature>
<feature type="region of interest" description="Catalytic" evidence="1">
    <location>
        <begin position="265"/>
        <end position="564"/>
    </location>
</feature>
<feature type="binding site" evidence="1">
    <location>
        <position position="358"/>
    </location>
    <ligand>
        <name>Zn(2+)</name>
        <dbReference type="ChEBI" id="CHEBI:29105"/>
    </ligand>
</feature>
<feature type="binding site" evidence="1">
    <location>
        <position position="409"/>
    </location>
    <ligand>
        <name>Zn(2+)</name>
        <dbReference type="ChEBI" id="CHEBI:29105"/>
    </ligand>
</feature>
<feature type="binding site" evidence="1">
    <location>
        <position position="541"/>
    </location>
    <ligand>
        <name>Zn(2+)</name>
        <dbReference type="ChEBI" id="CHEBI:29105"/>
    </ligand>
</feature>
<dbReference type="EC" id="6.1.1.3" evidence="1"/>
<dbReference type="EMBL" id="CP000509">
    <property type="protein sequence ID" value="ABL81875.1"/>
    <property type="molecule type" value="Genomic_DNA"/>
</dbReference>
<dbReference type="RefSeq" id="WP_011755816.1">
    <property type="nucleotide sequence ID" value="NC_008699.1"/>
</dbReference>
<dbReference type="SMR" id="A1SJ90"/>
<dbReference type="STRING" id="196162.Noca_2370"/>
<dbReference type="KEGG" id="nca:Noca_2370"/>
<dbReference type="eggNOG" id="COG0441">
    <property type="taxonomic scope" value="Bacteria"/>
</dbReference>
<dbReference type="HOGENOM" id="CLU_008554_0_1_11"/>
<dbReference type="OrthoDB" id="9802304at2"/>
<dbReference type="Proteomes" id="UP000000640">
    <property type="component" value="Chromosome"/>
</dbReference>
<dbReference type="GO" id="GO:0005737">
    <property type="term" value="C:cytoplasm"/>
    <property type="evidence" value="ECO:0007669"/>
    <property type="project" value="UniProtKB-SubCell"/>
</dbReference>
<dbReference type="GO" id="GO:0005524">
    <property type="term" value="F:ATP binding"/>
    <property type="evidence" value="ECO:0007669"/>
    <property type="project" value="UniProtKB-UniRule"/>
</dbReference>
<dbReference type="GO" id="GO:0046872">
    <property type="term" value="F:metal ion binding"/>
    <property type="evidence" value="ECO:0007669"/>
    <property type="project" value="UniProtKB-KW"/>
</dbReference>
<dbReference type="GO" id="GO:0004829">
    <property type="term" value="F:threonine-tRNA ligase activity"/>
    <property type="evidence" value="ECO:0007669"/>
    <property type="project" value="UniProtKB-UniRule"/>
</dbReference>
<dbReference type="GO" id="GO:0000049">
    <property type="term" value="F:tRNA binding"/>
    <property type="evidence" value="ECO:0007669"/>
    <property type="project" value="UniProtKB-KW"/>
</dbReference>
<dbReference type="GO" id="GO:0006435">
    <property type="term" value="P:threonyl-tRNA aminoacylation"/>
    <property type="evidence" value="ECO:0007669"/>
    <property type="project" value="UniProtKB-UniRule"/>
</dbReference>
<dbReference type="CDD" id="cd00860">
    <property type="entry name" value="ThrRS_anticodon"/>
    <property type="match status" value="1"/>
</dbReference>
<dbReference type="CDD" id="cd00771">
    <property type="entry name" value="ThrRS_core"/>
    <property type="match status" value="1"/>
</dbReference>
<dbReference type="FunFam" id="3.30.54.20:FF:000003">
    <property type="entry name" value="Threonine--tRNA ligase"/>
    <property type="match status" value="1"/>
</dbReference>
<dbReference type="FunFam" id="3.30.930.10:FF:000019">
    <property type="entry name" value="Threonine--tRNA ligase"/>
    <property type="match status" value="1"/>
</dbReference>
<dbReference type="FunFam" id="3.30.980.10:FF:000001">
    <property type="entry name" value="Threonine--tRNA ligase"/>
    <property type="match status" value="1"/>
</dbReference>
<dbReference type="FunFam" id="3.40.50.800:FF:000001">
    <property type="entry name" value="Threonine--tRNA ligase"/>
    <property type="match status" value="1"/>
</dbReference>
<dbReference type="Gene3D" id="3.30.54.20">
    <property type="match status" value="1"/>
</dbReference>
<dbReference type="Gene3D" id="3.40.50.800">
    <property type="entry name" value="Anticodon-binding domain"/>
    <property type="match status" value="1"/>
</dbReference>
<dbReference type="Gene3D" id="3.30.930.10">
    <property type="entry name" value="Bira Bifunctional Protein, Domain 2"/>
    <property type="match status" value="1"/>
</dbReference>
<dbReference type="Gene3D" id="3.30.980.10">
    <property type="entry name" value="Threonyl-trna Synthetase, Chain A, domain 2"/>
    <property type="match status" value="1"/>
</dbReference>
<dbReference type="HAMAP" id="MF_00184">
    <property type="entry name" value="Thr_tRNA_synth"/>
    <property type="match status" value="1"/>
</dbReference>
<dbReference type="InterPro" id="IPR002314">
    <property type="entry name" value="aa-tRNA-synt_IIb"/>
</dbReference>
<dbReference type="InterPro" id="IPR006195">
    <property type="entry name" value="aa-tRNA-synth_II"/>
</dbReference>
<dbReference type="InterPro" id="IPR045864">
    <property type="entry name" value="aa-tRNA-synth_II/BPL/LPL"/>
</dbReference>
<dbReference type="InterPro" id="IPR004154">
    <property type="entry name" value="Anticodon-bd"/>
</dbReference>
<dbReference type="InterPro" id="IPR036621">
    <property type="entry name" value="Anticodon-bd_dom_sf"/>
</dbReference>
<dbReference type="InterPro" id="IPR004095">
    <property type="entry name" value="TGS"/>
</dbReference>
<dbReference type="InterPro" id="IPR002320">
    <property type="entry name" value="Thr-tRNA-ligase_IIa"/>
</dbReference>
<dbReference type="InterPro" id="IPR018163">
    <property type="entry name" value="Thr/Ala-tRNA-synth_IIc_edit"/>
</dbReference>
<dbReference type="InterPro" id="IPR047246">
    <property type="entry name" value="ThrRS_anticodon"/>
</dbReference>
<dbReference type="InterPro" id="IPR033728">
    <property type="entry name" value="ThrRS_core"/>
</dbReference>
<dbReference type="InterPro" id="IPR012947">
    <property type="entry name" value="tRNA_SAD"/>
</dbReference>
<dbReference type="NCBIfam" id="TIGR00418">
    <property type="entry name" value="thrS"/>
    <property type="match status" value="1"/>
</dbReference>
<dbReference type="PANTHER" id="PTHR11451:SF44">
    <property type="entry name" value="THREONINE--TRNA LIGASE, CHLOROPLASTIC_MITOCHONDRIAL 2"/>
    <property type="match status" value="1"/>
</dbReference>
<dbReference type="PANTHER" id="PTHR11451">
    <property type="entry name" value="THREONINE-TRNA LIGASE"/>
    <property type="match status" value="1"/>
</dbReference>
<dbReference type="Pfam" id="PF03129">
    <property type="entry name" value="HGTP_anticodon"/>
    <property type="match status" value="1"/>
</dbReference>
<dbReference type="Pfam" id="PF00587">
    <property type="entry name" value="tRNA-synt_2b"/>
    <property type="match status" value="1"/>
</dbReference>
<dbReference type="Pfam" id="PF07973">
    <property type="entry name" value="tRNA_SAD"/>
    <property type="match status" value="1"/>
</dbReference>
<dbReference type="PRINTS" id="PR01047">
    <property type="entry name" value="TRNASYNTHTHR"/>
</dbReference>
<dbReference type="SMART" id="SM00863">
    <property type="entry name" value="tRNA_SAD"/>
    <property type="match status" value="1"/>
</dbReference>
<dbReference type="SUPFAM" id="SSF52954">
    <property type="entry name" value="Class II aaRS ABD-related"/>
    <property type="match status" value="1"/>
</dbReference>
<dbReference type="SUPFAM" id="SSF55681">
    <property type="entry name" value="Class II aaRS and biotin synthetases"/>
    <property type="match status" value="1"/>
</dbReference>
<dbReference type="SUPFAM" id="SSF55186">
    <property type="entry name" value="ThrRS/AlaRS common domain"/>
    <property type="match status" value="1"/>
</dbReference>
<dbReference type="PROSITE" id="PS50862">
    <property type="entry name" value="AA_TRNA_LIGASE_II"/>
    <property type="match status" value="1"/>
</dbReference>
<dbReference type="PROSITE" id="PS51880">
    <property type="entry name" value="TGS"/>
    <property type="match status" value="1"/>
</dbReference>
<protein>
    <recommendedName>
        <fullName evidence="1">Threonine--tRNA ligase</fullName>
        <ecNumber evidence="1">6.1.1.3</ecNumber>
    </recommendedName>
    <alternativeName>
        <fullName evidence="1">Threonyl-tRNA synthetase</fullName>
        <shortName evidence="1">ThrRS</shortName>
    </alternativeName>
</protein>
<name>SYT_NOCSJ</name>
<gene>
    <name evidence="1" type="primary">thrS</name>
    <name type="ordered locus">Noca_2370</name>
</gene>
<sequence>MSDLKIALTHADAREERTVTTGTKAWELFQDDPSVIAARVNGALRDLAHELADGDQVEPVAIDSPDGHDILRHSTAHVMAQAVQQLFPDAKLGIGPPVENGFYYDFDVDTPFNPADLDKIETAMRKIIKEGQRFSRRVTTDADAISELRDEPYKIELIGLKGSGASTGSTTEAVEGASVEVGAGELTIYDNIRRNGDVAWSDLCRGPHLPTTKRIPAFKLMRTAAAYWRGNEKNKQLQRIYGTAWESKDALEEHLHRIEEAERRDHRKLGRDLDLFSFPDEIGSGLPVFHPKGGVIKRVMEDYVRQRHVEEGFEYVGTPHIAKEGLFYTSGHLPYYGEAMFPPLDVDGMDYRLKAMNCPMHNLIFRSRQRSYRELPLRLFEFGHVYRHEKSGVIHGLTRVRGFAQDDSHSYVTKEQAPAEIKHLLDFCLGLFRDFGLDDFYLELSTRDDSKPDKFIGSDEDWAVATKVLEDVCIASGLELVPDPGGAAYYGPKVSVQARDAIGRTWQMSTIQYDFNQPSADRFDLHYTAADGSRQQPVMIHSAKFGSIERFIGVLVEHYAGAFPPWLAPVQVQAIPIAERHNDYLYDVAKRMQAQGLRVEVDDSDDRMQKKIRNAQLLKVPFMMIAGDDDVAAGAVSFRYRDGRQDNGVPLDEAIRRVADAVASREQV</sequence>
<proteinExistence type="inferred from homology"/>